<comment type="function">
    <text>May be involved in transcriptional regulation.</text>
</comment>
<comment type="interaction">
    <interactant intactId="EBI-11955189">
        <id>Q96N58</id>
    </interactant>
    <interactant intactId="EBI-748961">
        <id>O95273</id>
        <label>CCNDBP1</label>
    </interactant>
    <organismsDiffer>false</organismsDiffer>
    <experiments>3</experiments>
</comment>
<comment type="interaction">
    <interactant intactId="EBI-11955189">
        <id>Q96N58</id>
    </interactant>
    <interactant intactId="EBI-739624">
        <id>Q8NHQ1</id>
        <label>CEP70</label>
    </interactant>
    <organismsDiffer>false</organismsDiffer>
    <experiments>3</experiments>
</comment>
<comment type="interaction">
    <interactant intactId="EBI-11955189">
        <id>Q96N58</id>
    </interactant>
    <interactant intactId="EBI-10292696">
        <id>Q96Q77</id>
        <label>CIB3</label>
    </interactant>
    <organismsDiffer>false</organismsDiffer>
    <experiments>3</experiments>
</comment>
<comment type="interaction">
    <interactant intactId="EBI-11955189">
        <id>Q96N58</id>
    </interactant>
    <interactant intactId="EBI-5916454">
        <id>A6NEM1</id>
        <label>GOLGA6L9</label>
    </interactant>
    <organismsDiffer>false</organismsDiffer>
    <experiments>3</experiments>
</comment>
<comment type="interaction">
    <interactant intactId="EBI-11955189">
        <id>Q96N58</id>
    </interactant>
    <interactant intactId="EBI-10172150">
        <id>P60370</id>
        <label>KRTAP10-5</label>
    </interactant>
    <organismsDiffer>false</organismsDiffer>
    <experiments>3</experiments>
</comment>
<comment type="interaction">
    <interactant intactId="EBI-11955189">
        <id>Q96N58</id>
    </interactant>
    <interactant intactId="EBI-10172290">
        <id>P60409</id>
        <label>KRTAP10-7</label>
    </interactant>
    <organismsDiffer>false</organismsDiffer>
    <experiments>3</experiments>
</comment>
<comment type="interaction">
    <interactant intactId="EBI-11955189">
        <id>Q96N58</id>
    </interactant>
    <interactant intactId="EBI-10171774">
        <id>P60410</id>
        <label>KRTAP10-8</label>
    </interactant>
    <organismsDiffer>false</organismsDiffer>
    <experiments>3</experiments>
</comment>
<comment type="interaction">
    <interactant intactId="EBI-11955189">
        <id>Q96N58</id>
    </interactant>
    <interactant intactId="EBI-11953334">
        <id>P60328</id>
        <label>KRTAP12-3</label>
    </interactant>
    <organismsDiffer>false</organismsDiffer>
    <experiments>3</experiments>
</comment>
<comment type="interaction">
    <interactant intactId="EBI-11955189">
        <id>Q96N58</id>
    </interactant>
    <interactant intactId="EBI-11988175">
        <id>Q9BYP8</id>
        <label>KRTAP17-1</label>
    </interactant>
    <organismsDiffer>false</organismsDiffer>
    <experiments>3</experiments>
</comment>
<comment type="interaction">
    <interactant intactId="EBI-11955189">
        <id>Q96N58</id>
    </interactant>
    <interactant intactId="EBI-14065470">
        <id>Q9BYR9</id>
        <label>KRTAP2-4</label>
    </interactant>
    <organismsDiffer>false</organismsDiffer>
    <experiments>3</experiments>
</comment>
<comment type="interaction">
    <interactant intactId="EBI-11955189">
        <id>Q96N58</id>
    </interactant>
    <interactant intactId="EBI-724076">
        <id>Q99750</id>
        <label>MDFI</label>
    </interactant>
    <organismsDiffer>false</organismsDiffer>
    <experiments>3</experiments>
</comment>
<comment type="interaction">
    <interactant intactId="EBI-11955189">
        <id>Q96N58</id>
    </interactant>
    <interactant intactId="EBI-11035148">
        <id>Q8TF50</id>
        <label>ZNF526</label>
    </interactant>
    <organismsDiffer>false</organismsDiffer>
    <experiments>3</experiments>
</comment>
<comment type="subcellular location">
    <subcellularLocation>
        <location evidence="4">Nucleus</location>
    </subcellularLocation>
</comment>
<comment type="similarity">
    <text evidence="4">Belongs to the krueppel C2H2-type zinc-finger protein family.</text>
</comment>
<comment type="sequence caution" evidence="4">
    <conflict type="erroneous initiation">
        <sequence resource="EMBL-CDS" id="BAB71051"/>
    </conflict>
    <text>Truncated N-terminus.</text>
</comment>
<sequence length="590" mass="68531">MLHEEAAQKRKGKEPGMALPQGRLTFRDVAIEFSLAEWKFLNPAQRALYREVMLENYRNLEAVDISSKRMMKEVLSTGQGNTEVIHTGMLQRHESYHTGDFCFQEIEKDIHDFEFQSQKDERNGHEASMPKIKELMGSTDRHDQRHAGNKPIKDQLGLSFHLHLPELHIFQPEEKIANQVEKSVNDASSISTSQRISCRPETHTPNNYGNNFFHSSLLTQKQEVHMREKSFQCNETGEAFNCSSFVRKHQIIHLGEKQYKFDICGKVFNEKRYLARHRRCHTSEKPYKCNECGKSFSYKSSLTCHRRCHTGEKPYKCNECGKSFSYKSSLTCHHRCHTGEKPYKCNECGKSFSYKSSLRCHRRLHTGIKPYKCNECGKMFGQNSTLVIHKAIHTGEKPYKCNECGKAFNQQSHLSRHHRLHTGEKPYKCNDCGKAFIHQSSLARHHRLHTGEKSYKCEECDRVFSQKSNLERHKIIHTGEKPYKCNECHKTFSHRSSLPCHRRLHSGEKPYKCNECGKTFNVQSHLSRHHRLHTGEKPYKCKVCDKAFMCHSYLANHTRIHSGEKPYKCNECGKAHNHLIDSSIKPCMSS</sequence>
<dbReference type="EMBL" id="AK055946">
    <property type="protein sequence ID" value="BAB71051.1"/>
    <property type="status" value="ALT_INIT"/>
    <property type="molecule type" value="mRNA"/>
</dbReference>
<dbReference type="EMBL" id="AK299106">
    <property type="protein sequence ID" value="BAG61163.1"/>
    <property type="molecule type" value="mRNA"/>
</dbReference>
<dbReference type="EMBL" id="AC010332">
    <property type="status" value="NOT_ANNOTATED_CDS"/>
    <property type="molecule type" value="Genomic_DNA"/>
</dbReference>
<dbReference type="EMBL" id="AC010506">
    <property type="status" value="NOT_ANNOTATED_CDS"/>
    <property type="molecule type" value="Genomic_DNA"/>
</dbReference>
<dbReference type="EMBL" id="AC022150">
    <property type="status" value="NOT_ANNOTATED_CDS"/>
    <property type="molecule type" value="Genomic_DNA"/>
</dbReference>
<dbReference type="EMBL" id="CH471135">
    <property type="protein sequence ID" value="EAW72083.1"/>
    <property type="molecule type" value="Genomic_DNA"/>
</dbReference>
<dbReference type="CCDS" id="CCDS54310.1"/>
<dbReference type="RefSeq" id="NP_001093164.1">
    <property type="nucleotide sequence ID" value="NM_001099694.2"/>
</dbReference>
<dbReference type="RefSeq" id="NP_001353111.1">
    <property type="nucleotide sequence ID" value="NM_001366182.2"/>
</dbReference>
<dbReference type="RefSeq" id="XP_016881791.1">
    <property type="nucleotide sequence ID" value="XM_017026302.1"/>
</dbReference>
<dbReference type="RefSeq" id="XP_047294145.1">
    <property type="nucleotide sequence ID" value="XM_047438189.1"/>
</dbReference>
<dbReference type="RefSeq" id="XP_047294146.1">
    <property type="nucleotide sequence ID" value="XM_047438190.1"/>
</dbReference>
<dbReference type="RefSeq" id="XP_047294147.1">
    <property type="nucleotide sequence ID" value="XM_047438191.1"/>
</dbReference>
<dbReference type="RefSeq" id="XP_047294148.1">
    <property type="nucleotide sequence ID" value="XM_047438192.1"/>
</dbReference>
<dbReference type="RefSeq" id="XP_047294149.1">
    <property type="nucleotide sequence ID" value="XM_047438193.1"/>
</dbReference>
<dbReference type="SMR" id="Q96N58"/>
<dbReference type="BioGRID" id="127070">
    <property type="interactions" value="16"/>
</dbReference>
<dbReference type="FunCoup" id="Q96N58">
    <property type="interactions" value="12"/>
</dbReference>
<dbReference type="IntAct" id="Q96N58">
    <property type="interactions" value="28"/>
</dbReference>
<dbReference type="STRING" id="9606.ENSP00000459216"/>
<dbReference type="GlyGen" id="Q96N58">
    <property type="glycosylation" value="1 site, 1 O-linked glycan (1 site)"/>
</dbReference>
<dbReference type="iPTMnet" id="Q96N58"/>
<dbReference type="PhosphoSitePlus" id="Q96N58"/>
<dbReference type="BioMuta" id="ZNF578"/>
<dbReference type="DMDM" id="476007824"/>
<dbReference type="jPOST" id="Q96N58"/>
<dbReference type="MassIVE" id="Q96N58"/>
<dbReference type="PaxDb" id="9606-ENSP00000459216"/>
<dbReference type="PeptideAtlas" id="Q96N58"/>
<dbReference type="ProteomicsDB" id="46783"/>
<dbReference type="ProteomicsDB" id="77467"/>
<dbReference type="Pumba" id="Q96N58"/>
<dbReference type="Antibodypedia" id="56948">
    <property type="antibodies" value="66 antibodies from 11 providers"/>
</dbReference>
<dbReference type="DNASU" id="147660"/>
<dbReference type="Ensembl" id="ENST00000421239.7">
    <property type="protein sequence ID" value="ENSP00000459216.1"/>
    <property type="gene ID" value="ENSG00000258405.11"/>
</dbReference>
<dbReference type="GeneID" id="147660"/>
<dbReference type="KEGG" id="hsa:147660"/>
<dbReference type="MANE-Select" id="ENST00000421239.7">
    <property type="protein sequence ID" value="ENSP00000459216.1"/>
    <property type="RefSeq nucleotide sequence ID" value="NM_001099694.2"/>
    <property type="RefSeq protein sequence ID" value="NP_001093164.1"/>
</dbReference>
<dbReference type="UCSC" id="uc002pzp.5">
    <property type="organism name" value="human"/>
</dbReference>
<dbReference type="AGR" id="HGNC:26449"/>
<dbReference type="CTD" id="147660"/>
<dbReference type="DisGeNET" id="147660"/>
<dbReference type="GeneCards" id="ZNF578"/>
<dbReference type="HGNC" id="HGNC:26449">
    <property type="gene designation" value="ZNF578"/>
</dbReference>
<dbReference type="HPA" id="ENSG00000258405">
    <property type="expression patterns" value="Tissue enhanced (testis)"/>
</dbReference>
<dbReference type="neXtProt" id="NX_Q96N58"/>
<dbReference type="OpenTargets" id="ENSG00000258405"/>
<dbReference type="PharmGKB" id="PA134936072"/>
<dbReference type="VEuPathDB" id="HostDB:ENSG00000258405"/>
<dbReference type="eggNOG" id="KOG1721">
    <property type="taxonomic scope" value="Eukaryota"/>
</dbReference>
<dbReference type="GeneTree" id="ENSGT00940000154397"/>
<dbReference type="HOGENOM" id="CLU_002678_17_0_1"/>
<dbReference type="InParanoid" id="Q96N58"/>
<dbReference type="OMA" id="MCHSYLA"/>
<dbReference type="OrthoDB" id="9507676at2759"/>
<dbReference type="PAN-GO" id="Q96N58">
    <property type="GO annotations" value="4 GO annotations based on evolutionary models"/>
</dbReference>
<dbReference type="PhylomeDB" id="Q96N58"/>
<dbReference type="TreeFam" id="TF341892"/>
<dbReference type="PathwayCommons" id="Q96N58"/>
<dbReference type="SignaLink" id="Q96N58"/>
<dbReference type="BioGRID-ORCS" id="147660">
    <property type="hits" value="14 hits in 1060 CRISPR screens"/>
</dbReference>
<dbReference type="ChiTaRS" id="ZNF578">
    <property type="organism name" value="human"/>
</dbReference>
<dbReference type="GenomeRNAi" id="147660"/>
<dbReference type="Pharos" id="Q96N58">
    <property type="development level" value="Tdark"/>
</dbReference>
<dbReference type="PRO" id="PR:Q96N58"/>
<dbReference type="Proteomes" id="UP000005640">
    <property type="component" value="Chromosome 19"/>
</dbReference>
<dbReference type="RNAct" id="Q96N58">
    <property type="molecule type" value="protein"/>
</dbReference>
<dbReference type="Bgee" id="ENSG00000258405">
    <property type="expression patterns" value="Expressed in male germ line stem cell (sensu Vertebrata) in testis and 101 other cell types or tissues"/>
</dbReference>
<dbReference type="ExpressionAtlas" id="Q96N58">
    <property type="expression patterns" value="baseline and differential"/>
</dbReference>
<dbReference type="GO" id="GO:0005634">
    <property type="term" value="C:nucleus"/>
    <property type="evidence" value="ECO:0000318"/>
    <property type="project" value="GO_Central"/>
</dbReference>
<dbReference type="GO" id="GO:0000981">
    <property type="term" value="F:DNA-binding transcription factor activity, RNA polymerase II-specific"/>
    <property type="evidence" value="ECO:0000318"/>
    <property type="project" value="GO_Central"/>
</dbReference>
<dbReference type="GO" id="GO:0000978">
    <property type="term" value="F:RNA polymerase II cis-regulatory region sequence-specific DNA binding"/>
    <property type="evidence" value="ECO:0000318"/>
    <property type="project" value="GO_Central"/>
</dbReference>
<dbReference type="GO" id="GO:0008270">
    <property type="term" value="F:zinc ion binding"/>
    <property type="evidence" value="ECO:0007669"/>
    <property type="project" value="UniProtKB-KW"/>
</dbReference>
<dbReference type="GO" id="GO:0006357">
    <property type="term" value="P:regulation of transcription by RNA polymerase II"/>
    <property type="evidence" value="ECO:0000318"/>
    <property type="project" value="GO_Central"/>
</dbReference>
<dbReference type="CDD" id="cd07765">
    <property type="entry name" value="KRAB_A-box"/>
    <property type="match status" value="1"/>
</dbReference>
<dbReference type="FunFam" id="3.30.160.60:FF:004137">
    <property type="match status" value="1"/>
</dbReference>
<dbReference type="FunFam" id="3.30.160.60:FF:000358">
    <property type="entry name" value="zinc finger protein 24"/>
    <property type="match status" value="1"/>
</dbReference>
<dbReference type="FunFam" id="3.30.160.60:FF:000992">
    <property type="entry name" value="Zinc finger protein 320"/>
    <property type="match status" value="1"/>
</dbReference>
<dbReference type="FunFam" id="3.30.160.60:FF:002343">
    <property type="entry name" value="Zinc finger protein 33A"/>
    <property type="match status" value="1"/>
</dbReference>
<dbReference type="FunFam" id="3.30.160.60:FF:002402">
    <property type="entry name" value="Zinc finger protein 347"/>
    <property type="match status" value="1"/>
</dbReference>
<dbReference type="FunFam" id="3.30.160.60:FF:000016">
    <property type="entry name" value="zinc finger protein 37 homolog"/>
    <property type="match status" value="1"/>
</dbReference>
<dbReference type="FunFam" id="3.30.160.60:FF:002090">
    <property type="entry name" value="Zinc finger protein 473"/>
    <property type="match status" value="2"/>
</dbReference>
<dbReference type="FunFam" id="3.30.160.60:FF:001090">
    <property type="entry name" value="zinc finger protein 629 isoform X2"/>
    <property type="match status" value="1"/>
</dbReference>
<dbReference type="FunFam" id="3.30.160.60:FF:000188">
    <property type="entry name" value="Zinc finger protein 787"/>
    <property type="match status" value="2"/>
</dbReference>
<dbReference type="FunFam" id="3.30.160.60:FF:002289">
    <property type="entry name" value="Zinc finger protein 813"/>
    <property type="match status" value="1"/>
</dbReference>
<dbReference type="FunFam" id="3.30.160.60:FF:002292">
    <property type="entry name" value="Zinc finger protein 816"/>
    <property type="match status" value="1"/>
</dbReference>
<dbReference type="Gene3D" id="6.10.140.140">
    <property type="match status" value="1"/>
</dbReference>
<dbReference type="Gene3D" id="3.30.160.60">
    <property type="entry name" value="Classic Zinc Finger"/>
    <property type="match status" value="13"/>
</dbReference>
<dbReference type="InterPro" id="IPR001909">
    <property type="entry name" value="KRAB"/>
</dbReference>
<dbReference type="InterPro" id="IPR036051">
    <property type="entry name" value="KRAB_dom_sf"/>
</dbReference>
<dbReference type="InterPro" id="IPR036236">
    <property type="entry name" value="Znf_C2H2_sf"/>
</dbReference>
<dbReference type="InterPro" id="IPR013087">
    <property type="entry name" value="Znf_C2H2_type"/>
</dbReference>
<dbReference type="PANTHER" id="PTHR23235:SF178">
    <property type="entry name" value="C2H2-TYPE DOMAIN-CONTAINING PROTEIN-RELATED"/>
    <property type="match status" value="1"/>
</dbReference>
<dbReference type="PANTHER" id="PTHR23235">
    <property type="entry name" value="KRUEPPEL-LIKE TRANSCRIPTION FACTOR"/>
    <property type="match status" value="1"/>
</dbReference>
<dbReference type="Pfam" id="PF01352">
    <property type="entry name" value="KRAB"/>
    <property type="match status" value="1"/>
</dbReference>
<dbReference type="Pfam" id="PF00096">
    <property type="entry name" value="zf-C2H2"/>
    <property type="match status" value="6"/>
</dbReference>
<dbReference type="Pfam" id="PF13912">
    <property type="entry name" value="zf-C2H2_6"/>
    <property type="match status" value="1"/>
</dbReference>
<dbReference type="SMART" id="SM00349">
    <property type="entry name" value="KRAB"/>
    <property type="match status" value="1"/>
</dbReference>
<dbReference type="SMART" id="SM00355">
    <property type="entry name" value="ZnF_C2H2"/>
    <property type="match status" value="12"/>
</dbReference>
<dbReference type="SUPFAM" id="SSF57667">
    <property type="entry name" value="beta-beta-alpha zinc fingers"/>
    <property type="match status" value="7"/>
</dbReference>
<dbReference type="SUPFAM" id="SSF109640">
    <property type="entry name" value="KRAB domain (Kruppel-associated box)"/>
    <property type="match status" value="1"/>
</dbReference>
<dbReference type="PROSITE" id="PS50805">
    <property type="entry name" value="KRAB"/>
    <property type="match status" value="1"/>
</dbReference>
<dbReference type="PROSITE" id="PS00028">
    <property type="entry name" value="ZINC_FINGER_C2H2_1"/>
    <property type="match status" value="10"/>
</dbReference>
<dbReference type="PROSITE" id="PS50157">
    <property type="entry name" value="ZINC_FINGER_C2H2_2"/>
    <property type="match status" value="12"/>
</dbReference>
<proteinExistence type="evidence at protein level"/>
<accession>Q96N58</accession>
<accession>B4DR51</accession>
<accession>I3L1Y6</accession>
<evidence type="ECO:0000255" key="1">
    <source>
        <dbReference type="PROSITE-ProRule" id="PRU00042"/>
    </source>
</evidence>
<evidence type="ECO:0000255" key="2">
    <source>
        <dbReference type="PROSITE-ProRule" id="PRU00119"/>
    </source>
</evidence>
<evidence type="ECO:0000269" key="3">
    <source>
    </source>
</evidence>
<evidence type="ECO:0000305" key="4"/>
<feature type="chain" id="PRO_0000047668" description="Zinc finger protein 578">
    <location>
        <begin position="1"/>
        <end position="590"/>
    </location>
</feature>
<feature type="domain" description="KRAB" evidence="2">
    <location>
        <begin position="24"/>
        <end position="98"/>
    </location>
</feature>
<feature type="zinc finger region" description="C2H2-type 1; degenerate" evidence="1">
    <location>
        <begin position="231"/>
        <end position="253"/>
    </location>
</feature>
<feature type="zinc finger region" description="C2H2-type 2; degenerate" evidence="1">
    <location>
        <begin position="259"/>
        <end position="281"/>
    </location>
</feature>
<feature type="zinc finger region" description="C2H2-type 3" evidence="1">
    <location>
        <begin position="287"/>
        <end position="309"/>
    </location>
</feature>
<feature type="zinc finger region" description="C2H2-type 4" evidence="1">
    <location>
        <begin position="315"/>
        <end position="337"/>
    </location>
</feature>
<feature type="zinc finger region" description="C2H2-type 5" evidence="1">
    <location>
        <begin position="343"/>
        <end position="365"/>
    </location>
</feature>
<feature type="zinc finger region" description="C2H2-type 6" evidence="1">
    <location>
        <begin position="371"/>
        <end position="393"/>
    </location>
</feature>
<feature type="zinc finger region" description="C2H2-type 7" evidence="1">
    <location>
        <begin position="399"/>
        <end position="421"/>
    </location>
</feature>
<feature type="zinc finger region" description="C2H2-type 8" evidence="1">
    <location>
        <begin position="427"/>
        <end position="449"/>
    </location>
</feature>
<feature type="zinc finger region" description="C2H2-type 9" evidence="1">
    <location>
        <begin position="455"/>
        <end position="477"/>
    </location>
</feature>
<feature type="zinc finger region" description="C2H2-type 10" evidence="1">
    <location>
        <begin position="483"/>
        <end position="505"/>
    </location>
</feature>
<feature type="zinc finger region" description="C2H2-type 11" evidence="1">
    <location>
        <begin position="511"/>
        <end position="533"/>
    </location>
</feature>
<feature type="zinc finger region" description="C2H2-type 12" evidence="1">
    <location>
        <begin position="539"/>
        <end position="561"/>
    </location>
</feature>
<feature type="sequence variant" id="VAR_069167" description="In dbSNP:rs161931." evidence="3">
    <original>E</original>
    <variation>K</variation>
    <location>
        <position position="238"/>
    </location>
</feature>
<name>ZN578_HUMAN</name>
<protein>
    <recommendedName>
        <fullName>Zinc finger protein 578</fullName>
    </recommendedName>
</protein>
<organism>
    <name type="scientific">Homo sapiens</name>
    <name type="common">Human</name>
    <dbReference type="NCBI Taxonomy" id="9606"/>
    <lineage>
        <taxon>Eukaryota</taxon>
        <taxon>Metazoa</taxon>
        <taxon>Chordata</taxon>
        <taxon>Craniata</taxon>
        <taxon>Vertebrata</taxon>
        <taxon>Euteleostomi</taxon>
        <taxon>Mammalia</taxon>
        <taxon>Eutheria</taxon>
        <taxon>Euarchontoglires</taxon>
        <taxon>Primates</taxon>
        <taxon>Haplorrhini</taxon>
        <taxon>Catarrhini</taxon>
        <taxon>Hominidae</taxon>
        <taxon>Homo</taxon>
    </lineage>
</organism>
<reference key="1">
    <citation type="journal article" date="2004" name="Nat. Genet.">
        <title>Complete sequencing and characterization of 21,243 full-length human cDNAs.</title>
        <authorList>
            <person name="Ota T."/>
            <person name="Suzuki Y."/>
            <person name="Nishikawa T."/>
            <person name="Otsuki T."/>
            <person name="Sugiyama T."/>
            <person name="Irie R."/>
            <person name="Wakamatsu A."/>
            <person name="Hayashi K."/>
            <person name="Sato H."/>
            <person name="Nagai K."/>
            <person name="Kimura K."/>
            <person name="Makita H."/>
            <person name="Sekine M."/>
            <person name="Obayashi M."/>
            <person name="Nishi T."/>
            <person name="Shibahara T."/>
            <person name="Tanaka T."/>
            <person name="Ishii S."/>
            <person name="Yamamoto J."/>
            <person name="Saito K."/>
            <person name="Kawai Y."/>
            <person name="Isono Y."/>
            <person name="Nakamura Y."/>
            <person name="Nagahari K."/>
            <person name="Murakami K."/>
            <person name="Yasuda T."/>
            <person name="Iwayanagi T."/>
            <person name="Wagatsuma M."/>
            <person name="Shiratori A."/>
            <person name="Sudo H."/>
            <person name="Hosoiri T."/>
            <person name="Kaku Y."/>
            <person name="Kodaira H."/>
            <person name="Kondo H."/>
            <person name="Sugawara M."/>
            <person name="Takahashi M."/>
            <person name="Kanda K."/>
            <person name="Yokoi T."/>
            <person name="Furuya T."/>
            <person name="Kikkawa E."/>
            <person name="Omura Y."/>
            <person name="Abe K."/>
            <person name="Kamihara K."/>
            <person name="Katsuta N."/>
            <person name="Sato K."/>
            <person name="Tanikawa M."/>
            <person name="Yamazaki M."/>
            <person name="Ninomiya K."/>
            <person name="Ishibashi T."/>
            <person name="Yamashita H."/>
            <person name="Murakawa K."/>
            <person name="Fujimori K."/>
            <person name="Tanai H."/>
            <person name="Kimata M."/>
            <person name="Watanabe M."/>
            <person name="Hiraoka S."/>
            <person name="Chiba Y."/>
            <person name="Ishida S."/>
            <person name="Ono Y."/>
            <person name="Takiguchi S."/>
            <person name="Watanabe S."/>
            <person name="Yosida M."/>
            <person name="Hotuta T."/>
            <person name="Kusano J."/>
            <person name="Kanehori K."/>
            <person name="Takahashi-Fujii A."/>
            <person name="Hara H."/>
            <person name="Tanase T.-O."/>
            <person name="Nomura Y."/>
            <person name="Togiya S."/>
            <person name="Komai F."/>
            <person name="Hara R."/>
            <person name="Takeuchi K."/>
            <person name="Arita M."/>
            <person name="Imose N."/>
            <person name="Musashino K."/>
            <person name="Yuuki H."/>
            <person name="Oshima A."/>
            <person name="Sasaki N."/>
            <person name="Aotsuka S."/>
            <person name="Yoshikawa Y."/>
            <person name="Matsunawa H."/>
            <person name="Ichihara T."/>
            <person name="Shiohata N."/>
            <person name="Sano S."/>
            <person name="Moriya S."/>
            <person name="Momiyama H."/>
            <person name="Satoh N."/>
            <person name="Takami S."/>
            <person name="Terashima Y."/>
            <person name="Suzuki O."/>
            <person name="Nakagawa S."/>
            <person name="Senoh A."/>
            <person name="Mizoguchi H."/>
            <person name="Goto Y."/>
            <person name="Shimizu F."/>
            <person name="Wakebe H."/>
            <person name="Hishigaki H."/>
            <person name="Watanabe T."/>
            <person name="Sugiyama A."/>
            <person name="Takemoto M."/>
            <person name="Kawakami B."/>
            <person name="Yamazaki M."/>
            <person name="Watanabe K."/>
            <person name="Kumagai A."/>
            <person name="Itakura S."/>
            <person name="Fukuzumi Y."/>
            <person name="Fujimori Y."/>
            <person name="Komiyama M."/>
            <person name="Tashiro H."/>
            <person name="Tanigami A."/>
            <person name="Fujiwara T."/>
            <person name="Ono T."/>
            <person name="Yamada K."/>
            <person name="Fujii Y."/>
            <person name="Ozaki K."/>
            <person name="Hirao M."/>
            <person name="Ohmori Y."/>
            <person name="Kawabata A."/>
            <person name="Hikiji T."/>
            <person name="Kobatake N."/>
            <person name="Inagaki H."/>
            <person name="Ikema Y."/>
            <person name="Okamoto S."/>
            <person name="Okitani R."/>
            <person name="Kawakami T."/>
            <person name="Noguchi S."/>
            <person name="Itoh T."/>
            <person name="Shigeta K."/>
            <person name="Senba T."/>
            <person name="Matsumura K."/>
            <person name="Nakajima Y."/>
            <person name="Mizuno T."/>
            <person name="Morinaga M."/>
            <person name="Sasaki M."/>
            <person name="Togashi T."/>
            <person name="Oyama M."/>
            <person name="Hata H."/>
            <person name="Watanabe M."/>
            <person name="Komatsu T."/>
            <person name="Mizushima-Sugano J."/>
            <person name="Satoh T."/>
            <person name="Shirai Y."/>
            <person name="Takahashi Y."/>
            <person name="Nakagawa K."/>
            <person name="Okumura K."/>
            <person name="Nagase T."/>
            <person name="Nomura N."/>
            <person name="Kikuchi H."/>
            <person name="Masuho Y."/>
            <person name="Yamashita R."/>
            <person name="Nakai K."/>
            <person name="Yada T."/>
            <person name="Nakamura Y."/>
            <person name="Ohara O."/>
            <person name="Isogai T."/>
            <person name="Sugano S."/>
        </authorList>
    </citation>
    <scope>NUCLEOTIDE SEQUENCE [LARGE SCALE MRNA]</scope>
    <scope>VARIANT LYS-238</scope>
    <source>
        <tissue>Teratocarcinoma</tissue>
    </source>
</reference>
<reference key="2">
    <citation type="journal article" date="2004" name="Nature">
        <title>The DNA sequence and biology of human chromosome 19.</title>
        <authorList>
            <person name="Grimwood J."/>
            <person name="Gordon L.A."/>
            <person name="Olsen A.S."/>
            <person name="Terry A."/>
            <person name="Schmutz J."/>
            <person name="Lamerdin J.E."/>
            <person name="Hellsten U."/>
            <person name="Goodstein D."/>
            <person name="Couronne O."/>
            <person name="Tran-Gyamfi M."/>
            <person name="Aerts A."/>
            <person name="Altherr M."/>
            <person name="Ashworth L."/>
            <person name="Bajorek E."/>
            <person name="Black S."/>
            <person name="Branscomb E."/>
            <person name="Caenepeel S."/>
            <person name="Carrano A.V."/>
            <person name="Caoile C."/>
            <person name="Chan Y.M."/>
            <person name="Christensen M."/>
            <person name="Cleland C.A."/>
            <person name="Copeland A."/>
            <person name="Dalin E."/>
            <person name="Dehal P."/>
            <person name="Denys M."/>
            <person name="Detter J.C."/>
            <person name="Escobar J."/>
            <person name="Flowers D."/>
            <person name="Fotopulos D."/>
            <person name="Garcia C."/>
            <person name="Georgescu A.M."/>
            <person name="Glavina T."/>
            <person name="Gomez M."/>
            <person name="Gonzales E."/>
            <person name="Groza M."/>
            <person name="Hammon N."/>
            <person name="Hawkins T."/>
            <person name="Haydu L."/>
            <person name="Ho I."/>
            <person name="Huang W."/>
            <person name="Israni S."/>
            <person name="Jett J."/>
            <person name="Kadner K."/>
            <person name="Kimball H."/>
            <person name="Kobayashi A."/>
            <person name="Larionov V."/>
            <person name="Leem S.-H."/>
            <person name="Lopez F."/>
            <person name="Lou Y."/>
            <person name="Lowry S."/>
            <person name="Malfatti S."/>
            <person name="Martinez D."/>
            <person name="McCready P.M."/>
            <person name="Medina C."/>
            <person name="Morgan J."/>
            <person name="Nelson K."/>
            <person name="Nolan M."/>
            <person name="Ovcharenko I."/>
            <person name="Pitluck S."/>
            <person name="Pollard M."/>
            <person name="Popkie A.P."/>
            <person name="Predki P."/>
            <person name="Quan G."/>
            <person name="Ramirez L."/>
            <person name="Rash S."/>
            <person name="Retterer J."/>
            <person name="Rodriguez A."/>
            <person name="Rogers S."/>
            <person name="Salamov A."/>
            <person name="Salazar A."/>
            <person name="She X."/>
            <person name="Smith D."/>
            <person name="Slezak T."/>
            <person name="Solovyev V."/>
            <person name="Thayer N."/>
            <person name="Tice H."/>
            <person name="Tsai M."/>
            <person name="Ustaszewska A."/>
            <person name="Vo N."/>
            <person name="Wagner M."/>
            <person name="Wheeler J."/>
            <person name="Wu K."/>
            <person name="Xie G."/>
            <person name="Yang J."/>
            <person name="Dubchak I."/>
            <person name="Furey T.S."/>
            <person name="DeJong P."/>
            <person name="Dickson M."/>
            <person name="Gordon D."/>
            <person name="Eichler E.E."/>
            <person name="Pennacchio L.A."/>
            <person name="Richardson P."/>
            <person name="Stubbs L."/>
            <person name="Rokhsar D.S."/>
            <person name="Myers R.M."/>
            <person name="Rubin E.M."/>
            <person name="Lucas S.M."/>
        </authorList>
    </citation>
    <scope>NUCLEOTIDE SEQUENCE [LARGE SCALE GENOMIC DNA]</scope>
</reference>
<reference key="3">
    <citation type="submission" date="2005-07" db="EMBL/GenBank/DDBJ databases">
        <authorList>
            <person name="Mural R.J."/>
            <person name="Istrail S."/>
            <person name="Sutton G."/>
            <person name="Florea L."/>
            <person name="Halpern A.L."/>
            <person name="Mobarry C.M."/>
            <person name="Lippert R."/>
            <person name="Walenz B."/>
            <person name="Shatkay H."/>
            <person name="Dew I."/>
            <person name="Miller J.R."/>
            <person name="Flanigan M.J."/>
            <person name="Edwards N.J."/>
            <person name="Bolanos R."/>
            <person name="Fasulo D."/>
            <person name="Halldorsson B.V."/>
            <person name="Hannenhalli S."/>
            <person name="Turner R."/>
            <person name="Yooseph S."/>
            <person name="Lu F."/>
            <person name="Nusskern D.R."/>
            <person name="Shue B.C."/>
            <person name="Zheng X.H."/>
            <person name="Zhong F."/>
            <person name="Delcher A.L."/>
            <person name="Huson D.H."/>
            <person name="Kravitz S.A."/>
            <person name="Mouchard L."/>
            <person name="Reinert K."/>
            <person name="Remington K.A."/>
            <person name="Clark A.G."/>
            <person name="Waterman M.S."/>
            <person name="Eichler E.E."/>
            <person name="Adams M.D."/>
            <person name="Hunkapiller M.W."/>
            <person name="Myers E.W."/>
            <person name="Venter J.C."/>
        </authorList>
    </citation>
    <scope>NUCLEOTIDE SEQUENCE [LARGE SCALE GENOMIC DNA]</scope>
</reference>
<gene>
    <name type="primary">ZNF578</name>
</gene>
<keyword id="KW-0238">DNA-binding</keyword>
<keyword id="KW-0479">Metal-binding</keyword>
<keyword id="KW-0539">Nucleus</keyword>
<keyword id="KW-1267">Proteomics identification</keyword>
<keyword id="KW-1185">Reference proteome</keyword>
<keyword id="KW-0677">Repeat</keyword>
<keyword id="KW-0804">Transcription</keyword>
<keyword id="KW-0805">Transcription regulation</keyword>
<keyword id="KW-0862">Zinc</keyword>
<keyword id="KW-0863">Zinc-finger</keyword>